<accession>P09605</accession>
<name>KCRS_RAT</name>
<keyword id="KW-0067">ATP-binding</keyword>
<keyword id="KW-0903">Direct protein sequencing</keyword>
<keyword id="KW-0418">Kinase</keyword>
<keyword id="KW-0472">Membrane</keyword>
<keyword id="KW-0496">Mitochondrion</keyword>
<keyword id="KW-0999">Mitochondrion inner membrane</keyword>
<keyword id="KW-0547">Nucleotide-binding</keyword>
<keyword id="KW-0597">Phosphoprotein</keyword>
<keyword id="KW-1185">Reference proteome</keyword>
<keyword id="KW-0808">Transferase</keyword>
<keyword id="KW-0809">Transit peptide</keyword>
<evidence type="ECO:0000250" key="1">
    <source>
        <dbReference type="UniProtKB" id="Q6P8J7"/>
    </source>
</evidence>
<evidence type="ECO:0000255" key="2">
    <source>
        <dbReference type="PROSITE-ProRule" id="PRU00842"/>
    </source>
</evidence>
<evidence type="ECO:0000255" key="3">
    <source>
        <dbReference type="PROSITE-ProRule" id="PRU00843"/>
    </source>
</evidence>
<evidence type="ECO:0000255" key="4">
    <source>
        <dbReference type="PROSITE-ProRule" id="PRU10029"/>
    </source>
</evidence>
<evidence type="ECO:0000269" key="5">
    <source>
    </source>
</evidence>
<evidence type="ECO:0000305" key="6"/>
<evidence type="ECO:0007744" key="7">
    <source>
    </source>
</evidence>
<dbReference type="EC" id="2.7.3.2"/>
<dbReference type="EMBL" id="X59736">
    <property type="protein sequence ID" value="CAA42414.1"/>
    <property type="molecule type" value="mRNA"/>
</dbReference>
<dbReference type="PIR" id="S17188">
    <property type="entry name" value="S17188"/>
</dbReference>
<dbReference type="SMR" id="P09605"/>
<dbReference type="FunCoup" id="P09605">
    <property type="interactions" value="8"/>
</dbReference>
<dbReference type="CarbonylDB" id="P09605"/>
<dbReference type="GlyGen" id="P09605">
    <property type="glycosylation" value="9 sites, 1 O-linked glycan (9 sites)"/>
</dbReference>
<dbReference type="iPTMnet" id="P09605"/>
<dbReference type="PhosphoSitePlus" id="P09605"/>
<dbReference type="jPOST" id="P09605"/>
<dbReference type="UCSC" id="RGD:61977">
    <property type="organism name" value="rat"/>
</dbReference>
<dbReference type="AGR" id="RGD:61977"/>
<dbReference type="RGD" id="61977">
    <property type="gene designation" value="Ckmt2"/>
</dbReference>
<dbReference type="InParanoid" id="P09605"/>
<dbReference type="PhylomeDB" id="P09605"/>
<dbReference type="Reactome" id="R-RNO-71288">
    <property type="pathway name" value="Creatine metabolism"/>
</dbReference>
<dbReference type="PRO" id="PR:P09605"/>
<dbReference type="Proteomes" id="UP000002494">
    <property type="component" value="Unplaced"/>
</dbReference>
<dbReference type="GO" id="GO:0005743">
    <property type="term" value="C:mitochondrial inner membrane"/>
    <property type="evidence" value="ECO:0007669"/>
    <property type="project" value="UniProtKB-SubCell"/>
</dbReference>
<dbReference type="GO" id="GO:0005739">
    <property type="term" value="C:mitochondrion"/>
    <property type="evidence" value="ECO:0000318"/>
    <property type="project" value="GO_Central"/>
</dbReference>
<dbReference type="GO" id="GO:0005524">
    <property type="term" value="F:ATP binding"/>
    <property type="evidence" value="ECO:0007669"/>
    <property type="project" value="UniProtKB-KW"/>
</dbReference>
<dbReference type="GO" id="GO:1901612">
    <property type="term" value="F:cardiolipin binding"/>
    <property type="evidence" value="ECO:0000314"/>
    <property type="project" value="RGD"/>
</dbReference>
<dbReference type="GO" id="GO:0004111">
    <property type="term" value="F:creatine kinase activity"/>
    <property type="evidence" value="ECO:0000318"/>
    <property type="project" value="GO_Central"/>
</dbReference>
<dbReference type="GO" id="GO:0007507">
    <property type="term" value="P:heart development"/>
    <property type="evidence" value="ECO:0000270"/>
    <property type="project" value="RGD"/>
</dbReference>
<dbReference type="GO" id="GO:0046314">
    <property type="term" value="P:phosphocreatine biosynthetic process"/>
    <property type="evidence" value="ECO:0000318"/>
    <property type="project" value="GO_Central"/>
</dbReference>
<dbReference type="GO" id="GO:0007519">
    <property type="term" value="P:skeletal muscle tissue development"/>
    <property type="evidence" value="ECO:0000270"/>
    <property type="project" value="RGD"/>
</dbReference>
<dbReference type="CDD" id="cd00716">
    <property type="entry name" value="creatine_kinase_like"/>
    <property type="match status" value="1"/>
</dbReference>
<dbReference type="FunFam" id="3.30.590.10:FF:000002">
    <property type="entry name" value="Creatine kinase S-type, mitochondrial"/>
    <property type="match status" value="1"/>
</dbReference>
<dbReference type="FunFam" id="1.10.135.10:FF:000002">
    <property type="entry name" value="creatine kinase S-type, mitochondrial"/>
    <property type="match status" value="1"/>
</dbReference>
<dbReference type="Gene3D" id="1.10.135.10">
    <property type="entry name" value="ATP:guanido phosphotransferase, N-terminal domain"/>
    <property type="match status" value="1"/>
</dbReference>
<dbReference type="Gene3D" id="3.30.590.10">
    <property type="entry name" value="Glutamine synthetase/guanido kinase, catalytic domain"/>
    <property type="match status" value="1"/>
</dbReference>
<dbReference type="InterPro" id="IPR000749">
    <property type="entry name" value="ATP-guanido_PTrfase"/>
</dbReference>
<dbReference type="InterPro" id="IPR022415">
    <property type="entry name" value="ATP-guanido_PTrfase_AS"/>
</dbReference>
<dbReference type="InterPro" id="IPR022414">
    <property type="entry name" value="ATP-guanido_PTrfase_cat"/>
</dbReference>
<dbReference type="InterPro" id="IPR022413">
    <property type="entry name" value="ATP-guanido_PTrfase_N"/>
</dbReference>
<dbReference type="InterPro" id="IPR036802">
    <property type="entry name" value="ATP-guanido_PTrfase_N_sf"/>
</dbReference>
<dbReference type="InterPro" id="IPR014746">
    <property type="entry name" value="Gln_synth/guanido_kin_cat_dom"/>
</dbReference>
<dbReference type="PANTHER" id="PTHR11547">
    <property type="entry name" value="ARGININE OR CREATINE KINASE"/>
    <property type="match status" value="1"/>
</dbReference>
<dbReference type="PANTHER" id="PTHR11547:SF19">
    <property type="entry name" value="CREATINE KINASE S-TYPE, MITOCHONDRIAL"/>
    <property type="match status" value="1"/>
</dbReference>
<dbReference type="Pfam" id="PF00217">
    <property type="entry name" value="ATP-gua_Ptrans"/>
    <property type="match status" value="1"/>
</dbReference>
<dbReference type="Pfam" id="PF02807">
    <property type="entry name" value="ATP-gua_PtransN"/>
    <property type="match status" value="1"/>
</dbReference>
<dbReference type="SUPFAM" id="SSF55931">
    <property type="entry name" value="Glutamine synthetase/guanido kinase"/>
    <property type="match status" value="1"/>
</dbReference>
<dbReference type="SUPFAM" id="SSF48034">
    <property type="entry name" value="Guanido kinase N-terminal domain"/>
    <property type="match status" value="1"/>
</dbReference>
<dbReference type="PROSITE" id="PS00112">
    <property type="entry name" value="PHOSPHAGEN_KINASE"/>
    <property type="match status" value="1"/>
</dbReference>
<dbReference type="PROSITE" id="PS51510">
    <property type="entry name" value="PHOSPHAGEN_KINASE_C"/>
    <property type="match status" value="1"/>
</dbReference>
<dbReference type="PROSITE" id="PS51509">
    <property type="entry name" value="PHOSPHAGEN_KINASE_N"/>
    <property type="match status" value="1"/>
</dbReference>
<proteinExistence type="evidence at protein level"/>
<reference key="1">
    <citation type="journal article" date="1991" name="Biochim. Biophys. Acta">
        <title>Structural characterization and tissue-specific expression of the mRNAs encoding isoenzymes from two rat mitochondrial creatine kinase genes.</title>
        <authorList>
            <person name="Payne R.M."/>
            <person name="Haas R.C."/>
            <person name="Strauss A.W."/>
        </authorList>
    </citation>
    <scope>NUCLEOTIDE SEQUENCE [MRNA]</scope>
    <source>
        <strain>Sprague-Dawley</strain>
        <tissue>Heart</tissue>
    </source>
</reference>
<reference key="2">
    <citation type="journal article" date="1988" name="Eur. J. Biochem.">
        <title>Identification and primary structure of the cardiolipin-binding domain of mitochondrial creatine kinase.</title>
        <authorList>
            <person name="Cheneval D."/>
            <person name="Carafoli E."/>
        </authorList>
    </citation>
    <scope>PROTEIN SEQUENCE OF 40-79</scope>
    <source>
        <tissue>Heart</tissue>
    </source>
</reference>
<reference key="3">
    <citation type="journal article" date="2012" name="Nat. Commun.">
        <title>Quantitative maps of protein phosphorylation sites across 14 different rat organs and tissues.</title>
        <authorList>
            <person name="Lundby A."/>
            <person name="Secher A."/>
            <person name="Lage K."/>
            <person name="Nordsborg N.B."/>
            <person name="Dmytriyev A."/>
            <person name="Lundby C."/>
            <person name="Olsen J.V."/>
        </authorList>
    </citation>
    <scope>PHOSPHORYLATION [LARGE SCALE ANALYSIS] AT TYR-255</scope>
    <scope>IDENTIFICATION BY MASS SPECTROMETRY [LARGE SCALE ANALYSIS]</scope>
</reference>
<feature type="transit peptide" description="Mitochondrion" evidence="5">
    <location>
        <begin position="1"/>
        <end position="39"/>
    </location>
</feature>
<feature type="chain" id="PRO_0000016598" description="Creatine kinase S-type, mitochondrial">
    <location>
        <begin position="40"/>
        <end position="419"/>
    </location>
</feature>
<feature type="domain" description="Phosphagen kinase N-terminal" evidence="2">
    <location>
        <begin position="46"/>
        <end position="132"/>
    </location>
</feature>
<feature type="domain" description="Phosphagen kinase C-terminal" evidence="3">
    <location>
        <begin position="159"/>
        <end position="401"/>
    </location>
</feature>
<feature type="region of interest" description="Cardiolipin-binding">
    <location>
        <begin position="40"/>
        <end position="64"/>
    </location>
</feature>
<feature type="binding site" evidence="3">
    <location>
        <begin position="162"/>
        <end position="166"/>
    </location>
    <ligand>
        <name>ATP</name>
        <dbReference type="ChEBI" id="CHEBI:30616"/>
    </ligand>
</feature>
<feature type="binding site" evidence="3">
    <location>
        <position position="225"/>
    </location>
    <ligand>
        <name>ATP</name>
        <dbReference type="ChEBI" id="CHEBI:30616"/>
    </ligand>
</feature>
<feature type="binding site" evidence="3">
    <location>
        <position position="270"/>
    </location>
    <ligand>
        <name>ATP</name>
        <dbReference type="ChEBI" id="CHEBI:30616"/>
    </ligand>
</feature>
<feature type="binding site" evidence="3">
    <location>
        <position position="326"/>
    </location>
    <ligand>
        <name>ATP</name>
        <dbReference type="ChEBI" id="CHEBI:30616"/>
    </ligand>
</feature>
<feature type="binding site" evidence="3">
    <location>
        <begin position="354"/>
        <end position="359"/>
    </location>
    <ligand>
        <name>ATP</name>
        <dbReference type="ChEBI" id="CHEBI:30616"/>
    </ligand>
</feature>
<feature type="binding site" evidence="3">
    <location>
        <position position="369"/>
    </location>
    <ligand>
        <name>ATP</name>
        <dbReference type="ChEBI" id="CHEBI:30616"/>
    </ligand>
</feature>
<feature type="modified residue" description="Phosphotyrosine" evidence="7">
    <location>
        <position position="255"/>
    </location>
</feature>
<feature type="modified residue" description="Phosphothreonine" evidence="1">
    <location>
        <position position="356"/>
    </location>
</feature>
<feature type="sequence conflict" description="In Ref. 2; AA sequence." evidence="6" ref="2">
    <original>H</original>
    <variation>C</variation>
    <location>
        <position position="45"/>
    </location>
</feature>
<feature type="sequence conflict" description="In Ref. 2; AA sequence." evidence="6" ref="2">
    <original>S</original>
    <variation>H</variation>
    <location>
        <position position="51"/>
    </location>
</feature>
<feature type="sequence conflict" description="In Ref. 2; AA sequence." evidence="6" ref="2">
    <original>TI</original>
    <variation>IK</variation>
    <location>
        <begin position="71"/>
        <end position="72"/>
    </location>
</feature>
<feature type="sequence conflict" description="In Ref. 2; AA sequence." evidence="6" ref="2">
    <original>RNK</original>
    <variation>NCG</variation>
    <location>
        <begin position="77"/>
        <end position="79"/>
    </location>
</feature>
<comment type="function">
    <text>Reversibly catalyzes the transfer of phosphate between ATP and various phosphogens (e.g. creatine phosphate). Creatine kinase isoenzymes play a central role in energy transduction in tissues with large, fluctuating energy demands, such as skeletal muscle, heart, brain and spermatozoa.</text>
</comment>
<comment type="catalytic activity">
    <reaction evidence="4">
        <text>creatine + ATP = N-phosphocreatine + ADP + H(+)</text>
        <dbReference type="Rhea" id="RHEA:17157"/>
        <dbReference type="ChEBI" id="CHEBI:15378"/>
        <dbReference type="ChEBI" id="CHEBI:30616"/>
        <dbReference type="ChEBI" id="CHEBI:57947"/>
        <dbReference type="ChEBI" id="CHEBI:58092"/>
        <dbReference type="ChEBI" id="CHEBI:456216"/>
        <dbReference type="EC" id="2.7.3.2"/>
    </reaction>
</comment>
<comment type="subunit">
    <text>Exists as an octamer composed of four CKMT2 homodimers.</text>
</comment>
<comment type="subcellular location">
    <subcellularLocation>
        <location>Mitochondrion inner membrane</location>
        <topology>Peripheral membrane protein</topology>
        <orientation>Intermembrane side</orientation>
    </subcellularLocation>
</comment>
<comment type="tissue specificity">
    <text>Sarcomere-specific. Found only in heart and skeletal muscles.</text>
</comment>
<comment type="miscellaneous">
    <text>Mitochondrial creatine kinase binds cardiolipin.</text>
</comment>
<comment type="similarity">
    <text evidence="2 3">Belongs to the ATP:guanido phosphotransferase family.</text>
</comment>
<protein>
    <recommendedName>
        <fullName>Creatine kinase S-type, mitochondrial</fullName>
        <ecNumber>2.7.3.2</ecNumber>
    </recommendedName>
    <alternativeName>
        <fullName>Basic-type mitochondrial creatine kinase</fullName>
        <shortName>Mib-CK</shortName>
    </alternativeName>
    <alternativeName>
        <fullName>Sarcomeric mitochondrial creatine kinase</fullName>
        <shortName>S-MtCK</shortName>
    </alternativeName>
</protein>
<gene>
    <name type="primary">Ckmt2</name>
</gene>
<organism>
    <name type="scientific">Rattus norvegicus</name>
    <name type="common">Rat</name>
    <dbReference type="NCBI Taxonomy" id="10116"/>
    <lineage>
        <taxon>Eukaryota</taxon>
        <taxon>Metazoa</taxon>
        <taxon>Chordata</taxon>
        <taxon>Craniata</taxon>
        <taxon>Vertebrata</taxon>
        <taxon>Euteleostomi</taxon>
        <taxon>Mammalia</taxon>
        <taxon>Eutheria</taxon>
        <taxon>Euarchontoglires</taxon>
        <taxon>Glires</taxon>
        <taxon>Rodentia</taxon>
        <taxon>Myomorpha</taxon>
        <taxon>Muroidea</taxon>
        <taxon>Muridae</taxon>
        <taxon>Murinae</taxon>
        <taxon>Rattus</taxon>
    </lineage>
</organism>
<sequence length="419" mass="47385">MASAFSKLLTGRNASLLFTTLGTSALTTGYLLNRQKVSADAREQHKLFPPSADYPDLRKHNNCMAECLTPTIYAKLRNKMTPSGYTLDQCIQTGVDNPGHPFIKTVGMVAGDEESYEVFADLFDPVIKLRHNGYDPRLMKHPADLDASKITHGQFDERYVLSSRVRTGRSIRGLSLPPACSRAERREVENVAITALGGLKGDLAGRYYKLSEMTEQDQQRLIDDHFLFDKPVSPLLTCAGMARDWPDARGIWHNYDKTFLIWINEEDHTRVISMEKGGNMKRVFERFCRGLKEVERLIQERGWEFMWNERLGYILTCPSNLGTGLRAGVHVRIPKLSKDPRFSKILENLRLQKRGTGGVDTAAVADVYDISNIDRIGRSEVELVQIVIDGVNYLVDCEKKLERGQDIKVPPPLPQFGRK</sequence>